<protein>
    <recommendedName>
        <fullName evidence="1">Acetyl-coenzyme A carboxylase carboxyl transferase subunit beta</fullName>
        <shortName evidence="1">ACCase subunit beta</shortName>
        <shortName evidence="1">Acetyl-CoA carboxylase carboxyltransferase subunit beta</shortName>
        <ecNumber evidence="1">2.1.3.15</ecNumber>
    </recommendedName>
</protein>
<name>ACCD_STRS7</name>
<keyword id="KW-0067">ATP-binding</keyword>
<keyword id="KW-0963">Cytoplasm</keyword>
<keyword id="KW-0275">Fatty acid biosynthesis</keyword>
<keyword id="KW-0276">Fatty acid metabolism</keyword>
<keyword id="KW-0444">Lipid biosynthesis</keyword>
<keyword id="KW-0443">Lipid metabolism</keyword>
<keyword id="KW-0479">Metal-binding</keyword>
<keyword id="KW-0547">Nucleotide-binding</keyword>
<keyword id="KW-0808">Transferase</keyword>
<keyword id="KW-0862">Zinc</keyword>
<keyword id="KW-0863">Zinc-finger</keyword>
<comment type="function">
    <text evidence="1">Component of the acetyl coenzyme A carboxylase (ACC) complex. Biotin carboxylase (BC) catalyzes the carboxylation of biotin on its carrier protein (BCCP) and then the CO(2) group is transferred by the transcarboxylase to acetyl-CoA to form malonyl-CoA.</text>
</comment>
<comment type="catalytic activity">
    <reaction evidence="1">
        <text>N(6)-carboxybiotinyl-L-lysyl-[protein] + acetyl-CoA = N(6)-biotinyl-L-lysyl-[protein] + malonyl-CoA</text>
        <dbReference type="Rhea" id="RHEA:54728"/>
        <dbReference type="Rhea" id="RHEA-COMP:10505"/>
        <dbReference type="Rhea" id="RHEA-COMP:10506"/>
        <dbReference type="ChEBI" id="CHEBI:57288"/>
        <dbReference type="ChEBI" id="CHEBI:57384"/>
        <dbReference type="ChEBI" id="CHEBI:83144"/>
        <dbReference type="ChEBI" id="CHEBI:83145"/>
        <dbReference type="EC" id="2.1.3.15"/>
    </reaction>
</comment>
<comment type="cofactor">
    <cofactor evidence="1">
        <name>Zn(2+)</name>
        <dbReference type="ChEBI" id="CHEBI:29105"/>
    </cofactor>
    <text evidence="1">Binds 1 zinc ion per subunit.</text>
</comment>
<comment type="pathway">
    <text evidence="1">Lipid metabolism; malonyl-CoA biosynthesis; malonyl-CoA from acetyl-CoA: step 1/1.</text>
</comment>
<comment type="subunit">
    <text evidence="1">Acetyl-CoA carboxylase is a heterohexamer composed of biotin carboxyl carrier protein (AccB), biotin carboxylase (AccC) and two subunits each of ACCase subunit alpha (AccA) and ACCase subunit beta (AccD).</text>
</comment>
<comment type="subcellular location">
    <subcellularLocation>
        <location evidence="1">Cytoplasm</location>
    </subcellularLocation>
</comment>
<comment type="similarity">
    <text evidence="1">Belongs to the AccD/PCCB family.</text>
</comment>
<gene>
    <name evidence="1" type="primary">accD</name>
    <name type="ordered locus">SZO_15650</name>
</gene>
<reference key="1">
    <citation type="journal article" date="2009" name="PLoS Pathog.">
        <title>Genomic evidence for the evolution of Streptococcus equi: host restriction, increased virulence, and genetic exchange with human pathogens.</title>
        <authorList>
            <person name="Holden M.T.G."/>
            <person name="Heather Z."/>
            <person name="Paillot R."/>
            <person name="Steward K.F."/>
            <person name="Webb K."/>
            <person name="Ainslie F."/>
            <person name="Jourdan T."/>
            <person name="Bason N.C."/>
            <person name="Holroyd N.E."/>
            <person name="Mungall K."/>
            <person name="Quail M.A."/>
            <person name="Sanders M."/>
            <person name="Simmonds M."/>
            <person name="Willey D."/>
            <person name="Brooks K."/>
            <person name="Aanensen D.M."/>
            <person name="Spratt B.G."/>
            <person name="Jolley K.A."/>
            <person name="Maiden M.C.J."/>
            <person name="Kehoe M."/>
            <person name="Chanter N."/>
            <person name="Bentley S.D."/>
            <person name="Robinson C."/>
            <person name="Maskell D.J."/>
            <person name="Parkhill J."/>
            <person name="Waller A.S."/>
        </authorList>
    </citation>
    <scope>NUCLEOTIDE SEQUENCE [LARGE SCALE GENOMIC DNA]</scope>
    <source>
        <strain>H70</strain>
    </source>
</reference>
<evidence type="ECO:0000255" key="1">
    <source>
        <dbReference type="HAMAP-Rule" id="MF_01395"/>
    </source>
</evidence>
<evidence type="ECO:0000255" key="2">
    <source>
        <dbReference type="PROSITE-ProRule" id="PRU01136"/>
    </source>
</evidence>
<proteinExistence type="inferred from homology"/>
<feature type="chain" id="PRO_0000389868" description="Acetyl-coenzyme A carboxylase carboxyl transferase subunit beta">
    <location>
        <begin position="1"/>
        <end position="288"/>
    </location>
</feature>
<feature type="domain" description="CoA carboxyltransferase N-terminal" evidence="2">
    <location>
        <begin position="34"/>
        <end position="288"/>
    </location>
</feature>
<feature type="zinc finger region" description="C4-type" evidence="1">
    <location>
        <begin position="38"/>
        <end position="59"/>
    </location>
</feature>
<feature type="binding site" evidence="1">
    <location>
        <position position="38"/>
    </location>
    <ligand>
        <name>Zn(2+)</name>
        <dbReference type="ChEBI" id="CHEBI:29105"/>
    </ligand>
</feature>
<feature type="binding site" evidence="1">
    <location>
        <position position="41"/>
    </location>
    <ligand>
        <name>Zn(2+)</name>
        <dbReference type="ChEBI" id="CHEBI:29105"/>
    </ligand>
</feature>
<feature type="binding site" evidence="1">
    <location>
        <position position="56"/>
    </location>
    <ligand>
        <name>Zn(2+)</name>
        <dbReference type="ChEBI" id="CHEBI:29105"/>
    </ligand>
</feature>
<feature type="binding site" evidence="1">
    <location>
        <position position="59"/>
    </location>
    <ligand>
        <name>Zn(2+)</name>
        <dbReference type="ChEBI" id="CHEBI:29105"/>
    </ligand>
</feature>
<organism>
    <name type="scientific">Streptococcus equi subsp. zooepidemicus (strain H70)</name>
    <dbReference type="NCBI Taxonomy" id="553483"/>
    <lineage>
        <taxon>Bacteria</taxon>
        <taxon>Bacillati</taxon>
        <taxon>Bacillota</taxon>
        <taxon>Bacilli</taxon>
        <taxon>Lactobacillales</taxon>
        <taxon>Streptococcaceae</taxon>
        <taxon>Streptococcus</taxon>
    </lineage>
</organism>
<sequence>MALFSKKDKYIRITPNNSLKSSVSRNVPEVPDELFAKCPACKHMIYQKDLGPAKICPTCSYNFRISAQERLALTVDEGSFQELFTDIETKDPLRFPDYQAKLQKARQATGLHEAVLTGTALVKGQRLALAIMDSHFIMASMGTVVGEKITRLFELAINERLPVVIFTASGGARMQEGIMSLMQMAKVSAAVKRHSNAGLFYLTILTDPTTGGVTASFAMEGDMIIAEPQSLVGFAGRRVIETTVRENLPDDFQKVEFLKEHGFVDAIVKRTDLRDKIAHLVAFHGGVS</sequence>
<accession>C0ME09</accession>
<dbReference type="EC" id="2.1.3.15" evidence="1"/>
<dbReference type="EMBL" id="FM204884">
    <property type="protein sequence ID" value="CAX00267.1"/>
    <property type="molecule type" value="Genomic_DNA"/>
</dbReference>
<dbReference type="SMR" id="C0ME09"/>
<dbReference type="KEGG" id="seq:SZO_15650"/>
<dbReference type="eggNOG" id="COG0777">
    <property type="taxonomic scope" value="Bacteria"/>
</dbReference>
<dbReference type="HOGENOM" id="CLU_015486_1_1_9"/>
<dbReference type="UniPathway" id="UPA00655">
    <property type="reaction ID" value="UER00711"/>
</dbReference>
<dbReference type="Proteomes" id="UP000001368">
    <property type="component" value="Chromosome"/>
</dbReference>
<dbReference type="GO" id="GO:0009317">
    <property type="term" value="C:acetyl-CoA carboxylase complex"/>
    <property type="evidence" value="ECO:0007669"/>
    <property type="project" value="InterPro"/>
</dbReference>
<dbReference type="GO" id="GO:0003989">
    <property type="term" value="F:acetyl-CoA carboxylase activity"/>
    <property type="evidence" value="ECO:0007669"/>
    <property type="project" value="InterPro"/>
</dbReference>
<dbReference type="GO" id="GO:0005524">
    <property type="term" value="F:ATP binding"/>
    <property type="evidence" value="ECO:0007669"/>
    <property type="project" value="UniProtKB-KW"/>
</dbReference>
<dbReference type="GO" id="GO:0016743">
    <property type="term" value="F:carboxyl- or carbamoyltransferase activity"/>
    <property type="evidence" value="ECO:0007669"/>
    <property type="project" value="UniProtKB-UniRule"/>
</dbReference>
<dbReference type="GO" id="GO:0008270">
    <property type="term" value="F:zinc ion binding"/>
    <property type="evidence" value="ECO:0007669"/>
    <property type="project" value="UniProtKB-UniRule"/>
</dbReference>
<dbReference type="GO" id="GO:0006633">
    <property type="term" value="P:fatty acid biosynthetic process"/>
    <property type="evidence" value="ECO:0007669"/>
    <property type="project" value="UniProtKB-KW"/>
</dbReference>
<dbReference type="GO" id="GO:2001295">
    <property type="term" value="P:malonyl-CoA biosynthetic process"/>
    <property type="evidence" value="ECO:0007669"/>
    <property type="project" value="UniProtKB-UniRule"/>
</dbReference>
<dbReference type="Gene3D" id="3.90.226.10">
    <property type="entry name" value="2-enoyl-CoA Hydratase, Chain A, domain 1"/>
    <property type="match status" value="1"/>
</dbReference>
<dbReference type="HAMAP" id="MF_01395">
    <property type="entry name" value="AcetylCoA_CT_beta"/>
    <property type="match status" value="1"/>
</dbReference>
<dbReference type="InterPro" id="IPR034733">
    <property type="entry name" value="AcCoA_carboxyl_beta"/>
</dbReference>
<dbReference type="InterPro" id="IPR000438">
    <property type="entry name" value="Acetyl_CoA_COase_Trfase_b_su"/>
</dbReference>
<dbReference type="InterPro" id="IPR029045">
    <property type="entry name" value="ClpP/crotonase-like_dom_sf"/>
</dbReference>
<dbReference type="InterPro" id="IPR011762">
    <property type="entry name" value="COA_CT_N"/>
</dbReference>
<dbReference type="NCBIfam" id="TIGR00515">
    <property type="entry name" value="accD"/>
    <property type="match status" value="1"/>
</dbReference>
<dbReference type="PANTHER" id="PTHR42995">
    <property type="entry name" value="ACETYL-COENZYME A CARBOXYLASE CARBOXYL TRANSFERASE SUBUNIT BETA, CHLOROPLASTIC"/>
    <property type="match status" value="1"/>
</dbReference>
<dbReference type="PANTHER" id="PTHR42995:SF5">
    <property type="entry name" value="ACETYL-COENZYME A CARBOXYLASE CARBOXYL TRANSFERASE SUBUNIT BETA, CHLOROPLASTIC"/>
    <property type="match status" value="1"/>
</dbReference>
<dbReference type="Pfam" id="PF01039">
    <property type="entry name" value="Carboxyl_trans"/>
    <property type="match status" value="1"/>
</dbReference>
<dbReference type="PRINTS" id="PR01070">
    <property type="entry name" value="ACCCTRFRASEB"/>
</dbReference>
<dbReference type="SUPFAM" id="SSF52096">
    <property type="entry name" value="ClpP/crotonase"/>
    <property type="match status" value="1"/>
</dbReference>
<dbReference type="PROSITE" id="PS50980">
    <property type="entry name" value="COA_CT_NTER"/>
    <property type="match status" value="1"/>
</dbReference>